<proteinExistence type="inferred from homology"/>
<gene>
    <name type="ordered locus">SPP_1327</name>
</gene>
<sequence length="110" mass="13347">MEIEKTNRMNALFEFYAALLTDKQMNYIELYYADDYSLAEIAEEFGVSRQAVYDNIKRTEKILEDYEMKLHMYSDYIVRSQIFDQILERYPKDNFLQEQIEILTSIDNRE</sequence>
<dbReference type="EMBL" id="CP000920">
    <property type="protein sequence ID" value="ACO22066.1"/>
    <property type="molecule type" value="Genomic_DNA"/>
</dbReference>
<dbReference type="RefSeq" id="WP_000402071.1">
    <property type="nucleotide sequence ID" value="NC_012467.1"/>
</dbReference>
<dbReference type="SMR" id="C1CL23"/>
<dbReference type="KEGG" id="spp:SPP_1327"/>
<dbReference type="HOGENOM" id="CLU_129218_1_0_9"/>
<dbReference type="Gene3D" id="1.10.10.10">
    <property type="entry name" value="Winged helix-like DNA-binding domain superfamily/Winged helix DNA-binding domain"/>
    <property type="match status" value="1"/>
</dbReference>
<dbReference type="HAMAP" id="MF_00245">
    <property type="entry name" value="UPF0122"/>
    <property type="match status" value="1"/>
</dbReference>
<dbReference type="InterPro" id="IPR013324">
    <property type="entry name" value="RNA_pol_sigma_r3/r4-like"/>
</dbReference>
<dbReference type="InterPro" id="IPR007394">
    <property type="entry name" value="UPF0122"/>
</dbReference>
<dbReference type="InterPro" id="IPR054831">
    <property type="entry name" value="UPF0122_fam_protein"/>
</dbReference>
<dbReference type="InterPro" id="IPR036388">
    <property type="entry name" value="WH-like_DNA-bd_sf"/>
</dbReference>
<dbReference type="NCBIfam" id="NF001066">
    <property type="entry name" value="PRK00118.1-1"/>
    <property type="match status" value="1"/>
</dbReference>
<dbReference type="NCBIfam" id="NF001068">
    <property type="entry name" value="PRK00118.1-4"/>
    <property type="match status" value="1"/>
</dbReference>
<dbReference type="NCBIfam" id="NF001070">
    <property type="entry name" value="PRK00118.1-6"/>
    <property type="match status" value="1"/>
</dbReference>
<dbReference type="NCBIfam" id="NF045758">
    <property type="entry name" value="YlxM"/>
    <property type="match status" value="1"/>
</dbReference>
<dbReference type="PANTHER" id="PTHR40083">
    <property type="entry name" value="UPF0122 PROTEIN CBO2450/CLC_2298"/>
    <property type="match status" value="1"/>
</dbReference>
<dbReference type="PANTHER" id="PTHR40083:SF1">
    <property type="entry name" value="UPF0122 PROTEIN YLXM"/>
    <property type="match status" value="1"/>
</dbReference>
<dbReference type="Pfam" id="PF04297">
    <property type="entry name" value="UPF0122"/>
    <property type="match status" value="1"/>
</dbReference>
<dbReference type="SUPFAM" id="SSF88659">
    <property type="entry name" value="Sigma3 and sigma4 domains of RNA polymerase sigma factors"/>
    <property type="match status" value="1"/>
</dbReference>
<name>Y1327_STRZP</name>
<organism>
    <name type="scientific">Streptococcus pneumoniae (strain P1031)</name>
    <dbReference type="NCBI Taxonomy" id="488223"/>
    <lineage>
        <taxon>Bacteria</taxon>
        <taxon>Bacillati</taxon>
        <taxon>Bacillota</taxon>
        <taxon>Bacilli</taxon>
        <taxon>Lactobacillales</taxon>
        <taxon>Streptococcaceae</taxon>
        <taxon>Streptococcus</taxon>
    </lineage>
</organism>
<evidence type="ECO:0000255" key="1">
    <source>
        <dbReference type="HAMAP-Rule" id="MF_00245"/>
    </source>
</evidence>
<feature type="chain" id="PRO_1000197596" description="UPF0122 protein SPP_1327">
    <location>
        <begin position="1"/>
        <end position="110"/>
    </location>
</feature>
<protein>
    <recommendedName>
        <fullName evidence="1">UPF0122 protein SPP_1327</fullName>
    </recommendedName>
</protein>
<accession>C1CL23</accession>
<comment type="function">
    <text evidence="1">Might take part in the signal recognition particle (SRP) pathway. This is inferred from the conservation of its genetic proximity to ftsY/ffh. May be a regulatory protein.</text>
</comment>
<comment type="similarity">
    <text evidence="1">Belongs to the UPF0122 family.</text>
</comment>
<reference key="1">
    <citation type="journal article" date="2010" name="Genome Biol.">
        <title>Structure and dynamics of the pan-genome of Streptococcus pneumoniae and closely related species.</title>
        <authorList>
            <person name="Donati C."/>
            <person name="Hiller N.L."/>
            <person name="Tettelin H."/>
            <person name="Muzzi A."/>
            <person name="Croucher N.J."/>
            <person name="Angiuoli S.V."/>
            <person name="Oggioni M."/>
            <person name="Dunning Hotopp J.C."/>
            <person name="Hu F.Z."/>
            <person name="Riley D.R."/>
            <person name="Covacci A."/>
            <person name="Mitchell T.J."/>
            <person name="Bentley S.D."/>
            <person name="Kilian M."/>
            <person name="Ehrlich G.D."/>
            <person name="Rappuoli R."/>
            <person name="Moxon E.R."/>
            <person name="Masignani V."/>
        </authorList>
    </citation>
    <scope>NUCLEOTIDE SEQUENCE [LARGE SCALE GENOMIC DNA]</scope>
    <source>
        <strain>P1031</strain>
    </source>
</reference>